<feature type="chain" id="PRO_0000106201" description="Nucleotide-binding protein SAV_4896">
    <location>
        <begin position="1"/>
        <end position="162"/>
    </location>
</feature>
<evidence type="ECO:0000255" key="1">
    <source>
        <dbReference type="HAMAP-Rule" id="MF_00632"/>
    </source>
</evidence>
<dbReference type="EMBL" id="BA000030">
    <property type="protein sequence ID" value="BAC72608.1"/>
    <property type="molecule type" value="Genomic_DNA"/>
</dbReference>
<dbReference type="RefSeq" id="WP_010986316.1">
    <property type="nucleotide sequence ID" value="NZ_JZJK01000077.1"/>
</dbReference>
<dbReference type="SMR" id="Q82DS2"/>
<dbReference type="GeneID" id="41541976"/>
<dbReference type="KEGG" id="sma:SAVERM_4896"/>
<dbReference type="eggNOG" id="COG1666">
    <property type="taxonomic scope" value="Bacteria"/>
</dbReference>
<dbReference type="HOGENOM" id="CLU_099839_0_0_11"/>
<dbReference type="OrthoDB" id="9801447at2"/>
<dbReference type="Proteomes" id="UP000000428">
    <property type="component" value="Chromosome"/>
</dbReference>
<dbReference type="GO" id="GO:0005829">
    <property type="term" value="C:cytosol"/>
    <property type="evidence" value="ECO:0007669"/>
    <property type="project" value="TreeGrafter"/>
</dbReference>
<dbReference type="GO" id="GO:0000166">
    <property type="term" value="F:nucleotide binding"/>
    <property type="evidence" value="ECO:0007669"/>
    <property type="project" value="TreeGrafter"/>
</dbReference>
<dbReference type="CDD" id="cd11740">
    <property type="entry name" value="YajQ_like"/>
    <property type="match status" value="1"/>
</dbReference>
<dbReference type="FunFam" id="3.30.70.860:FF:000004">
    <property type="entry name" value="UPF0234 protein AWC22_11905"/>
    <property type="match status" value="1"/>
</dbReference>
<dbReference type="FunFam" id="3.30.70.990:FF:000003">
    <property type="entry name" value="UPF0234 protein MIP_06774"/>
    <property type="match status" value="1"/>
</dbReference>
<dbReference type="Gene3D" id="3.30.70.860">
    <property type="match status" value="1"/>
</dbReference>
<dbReference type="Gene3D" id="3.30.70.990">
    <property type="entry name" value="YajQ-like, domain 2"/>
    <property type="match status" value="1"/>
</dbReference>
<dbReference type="HAMAP" id="MF_00632">
    <property type="entry name" value="YajQ"/>
    <property type="match status" value="1"/>
</dbReference>
<dbReference type="InterPro" id="IPR007551">
    <property type="entry name" value="DUF520"/>
</dbReference>
<dbReference type="InterPro" id="IPR035571">
    <property type="entry name" value="UPF0234-like_C"/>
</dbReference>
<dbReference type="InterPro" id="IPR035570">
    <property type="entry name" value="UPF0234_N"/>
</dbReference>
<dbReference type="InterPro" id="IPR036183">
    <property type="entry name" value="YajQ-like_sf"/>
</dbReference>
<dbReference type="NCBIfam" id="NF003819">
    <property type="entry name" value="PRK05412.1"/>
    <property type="match status" value="1"/>
</dbReference>
<dbReference type="PANTHER" id="PTHR30476">
    <property type="entry name" value="UPF0234 PROTEIN YAJQ"/>
    <property type="match status" value="1"/>
</dbReference>
<dbReference type="PANTHER" id="PTHR30476:SF0">
    <property type="entry name" value="UPF0234 PROTEIN YAJQ"/>
    <property type="match status" value="1"/>
</dbReference>
<dbReference type="Pfam" id="PF04461">
    <property type="entry name" value="DUF520"/>
    <property type="match status" value="1"/>
</dbReference>
<dbReference type="SUPFAM" id="SSF89963">
    <property type="entry name" value="YajQ-like"/>
    <property type="match status" value="2"/>
</dbReference>
<organism>
    <name type="scientific">Streptomyces avermitilis (strain ATCC 31267 / DSM 46492 / JCM 5070 / NBRC 14893 / NCIMB 12804 / NRRL 8165 / MA-4680)</name>
    <dbReference type="NCBI Taxonomy" id="227882"/>
    <lineage>
        <taxon>Bacteria</taxon>
        <taxon>Bacillati</taxon>
        <taxon>Actinomycetota</taxon>
        <taxon>Actinomycetes</taxon>
        <taxon>Kitasatosporales</taxon>
        <taxon>Streptomycetaceae</taxon>
        <taxon>Streptomyces</taxon>
    </lineage>
</organism>
<gene>
    <name type="ordered locus">SAV_4896</name>
</gene>
<protein>
    <recommendedName>
        <fullName evidence="1">Nucleotide-binding protein SAV_4896</fullName>
    </recommendedName>
</protein>
<keyword id="KW-0547">Nucleotide-binding</keyword>
<keyword id="KW-1185">Reference proteome</keyword>
<proteinExistence type="inferred from homology"/>
<sequence length="162" mass="18010">MADSSFDIVSKVERQEVDNALNQAAKEISQRYDFKNVGASIAWSGEKILMQANSEERVKAILDVFETKLIKRGISLKALDAGEPQLSGKEYKIFASIEEGISQENAKKVAKVIRDEGPKGVKAQVQGDELRVSSKSRDDLQAVQALLKGQDFDFALQFVNYR</sequence>
<comment type="function">
    <text evidence="1">Nucleotide-binding protein.</text>
</comment>
<comment type="similarity">
    <text evidence="1">Belongs to the YajQ family.</text>
</comment>
<accession>Q82DS2</accession>
<name>Y4896_STRAW</name>
<reference key="1">
    <citation type="journal article" date="2001" name="Proc. Natl. Acad. Sci. U.S.A.">
        <title>Genome sequence of an industrial microorganism Streptomyces avermitilis: deducing the ability of producing secondary metabolites.</title>
        <authorList>
            <person name="Omura S."/>
            <person name="Ikeda H."/>
            <person name="Ishikawa J."/>
            <person name="Hanamoto A."/>
            <person name="Takahashi C."/>
            <person name="Shinose M."/>
            <person name="Takahashi Y."/>
            <person name="Horikawa H."/>
            <person name="Nakazawa H."/>
            <person name="Osonoe T."/>
            <person name="Kikuchi H."/>
            <person name="Shiba T."/>
            <person name="Sakaki Y."/>
            <person name="Hattori M."/>
        </authorList>
    </citation>
    <scope>NUCLEOTIDE SEQUENCE [LARGE SCALE GENOMIC DNA]</scope>
    <source>
        <strain>ATCC 31267 / DSM 46492 / JCM 5070 / NBRC 14893 / NCIMB 12804 / NRRL 8165 / MA-4680</strain>
    </source>
</reference>
<reference key="2">
    <citation type="journal article" date="2003" name="Nat. Biotechnol.">
        <title>Complete genome sequence and comparative analysis of the industrial microorganism Streptomyces avermitilis.</title>
        <authorList>
            <person name="Ikeda H."/>
            <person name="Ishikawa J."/>
            <person name="Hanamoto A."/>
            <person name="Shinose M."/>
            <person name="Kikuchi H."/>
            <person name="Shiba T."/>
            <person name="Sakaki Y."/>
            <person name="Hattori M."/>
            <person name="Omura S."/>
        </authorList>
    </citation>
    <scope>NUCLEOTIDE SEQUENCE [LARGE SCALE GENOMIC DNA]</scope>
    <source>
        <strain>ATCC 31267 / DSM 46492 / JCM 5070 / NBRC 14893 / NCIMB 12804 / NRRL 8165 / MA-4680</strain>
    </source>
</reference>